<dbReference type="EC" id="2.4.2.18" evidence="1"/>
<dbReference type="EMBL" id="M36636">
    <property type="protein sequence ID" value="AAA21904.1"/>
    <property type="molecule type" value="Genomic_DNA"/>
</dbReference>
<dbReference type="EMBL" id="CR543861">
    <property type="protein sequence ID" value="CAG69232.1"/>
    <property type="molecule type" value="Genomic_DNA"/>
</dbReference>
<dbReference type="PIR" id="A00585">
    <property type="entry name" value="NPKEDC"/>
</dbReference>
<dbReference type="RefSeq" id="WP_004928448.1">
    <property type="nucleotide sequence ID" value="NC_005966.1"/>
</dbReference>
<dbReference type="PDB" id="4GTN">
    <property type="method" value="X-ray"/>
    <property type="resolution" value="2.03 A"/>
    <property type="chains" value="A=2-349"/>
</dbReference>
<dbReference type="PDB" id="4YI7">
    <property type="method" value="X-ray"/>
    <property type="resolution" value="1.85 A"/>
    <property type="chains" value="A=2-349"/>
</dbReference>
<dbReference type="PDBsum" id="4GTN"/>
<dbReference type="PDBsum" id="4YI7"/>
<dbReference type="SMR" id="P00500"/>
<dbReference type="STRING" id="202950.GCA_001485005_01536"/>
<dbReference type="GeneID" id="45234767"/>
<dbReference type="KEGG" id="aci:ACIAD2462"/>
<dbReference type="eggNOG" id="COG0547">
    <property type="taxonomic scope" value="Bacteria"/>
</dbReference>
<dbReference type="HOGENOM" id="CLU_034315_2_1_6"/>
<dbReference type="OrthoDB" id="9806430at2"/>
<dbReference type="BioCyc" id="ASP62977:ACIAD_RS11250-MONOMER"/>
<dbReference type="BRENDA" id="4.1.3.27">
    <property type="organism ID" value="5690"/>
</dbReference>
<dbReference type="UniPathway" id="UPA00035">
    <property type="reaction ID" value="UER00041"/>
</dbReference>
<dbReference type="EvolutionaryTrace" id="P00500"/>
<dbReference type="Proteomes" id="UP000000430">
    <property type="component" value="Chromosome"/>
</dbReference>
<dbReference type="GO" id="GO:0005829">
    <property type="term" value="C:cytosol"/>
    <property type="evidence" value="ECO:0007669"/>
    <property type="project" value="TreeGrafter"/>
</dbReference>
<dbReference type="GO" id="GO:0004048">
    <property type="term" value="F:anthranilate phosphoribosyltransferase activity"/>
    <property type="evidence" value="ECO:0007669"/>
    <property type="project" value="UniProtKB-UniRule"/>
</dbReference>
<dbReference type="GO" id="GO:0000287">
    <property type="term" value="F:magnesium ion binding"/>
    <property type="evidence" value="ECO:0007669"/>
    <property type="project" value="UniProtKB-UniRule"/>
</dbReference>
<dbReference type="GO" id="GO:0000162">
    <property type="term" value="P:L-tryptophan biosynthetic process"/>
    <property type="evidence" value="ECO:0007669"/>
    <property type="project" value="UniProtKB-UniRule"/>
</dbReference>
<dbReference type="FunFam" id="1.20.970.10:FF:000006">
    <property type="entry name" value="Anthranilate phosphoribosyltransferase"/>
    <property type="match status" value="1"/>
</dbReference>
<dbReference type="FunFam" id="3.40.1030.10:FF:000002">
    <property type="entry name" value="Anthranilate phosphoribosyltransferase"/>
    <property type="match status" value="1"/>
</dbReference>
<dbReference type="Gene3D" id="3.40.1030.10">
    <property type="entry name" value="Nucleoside phosphorylase/phosphoribosyltransferase catalytic domain"/>
    <property type="match status" value="1"/>
</dbReference>
<dbReference type="Gene3D" id="1.20.970.10">
    <property type="entry name" value="Transferase, Pyrimidine Nucleoside Phosphorylase, Chain C"/>
    <property type="match status" value="1"/>
</dbReference>
<dbReference type="HAMAP" id="MF_00211">
    <property type="entry name" value="TrpD"/>
    <property type="match status" value="1"/>
</dbReference>
<dbReference type="InterPro" id="IPR005940">
    <property type="entry name" value="Anthranilate_Pribosyl_Tfrase"/>
</dbReference>
<dbReference type="InterPro" id="IPR000312">
    <property type="entry name" value="Glycosyl_Trfase_fam3"/>
</dbReference>
<dbReference type="InterPro" id="IPR017459">
    <property type="entry name" value="Glycosyl_Trfase_fam3_N_dom"/>
</dbReference>
<dbReference type="InterPro" id="IPR036320">
    <property type="entry name" value="Glycosyl_Trfase_fam3_N_dom_sf"/>
</dbReference>
<dbReference type="InterPro" id="IPR035902">
    <property type="entry name" value="Nuc_phospho_transferase"/>
</dbReference>
<dbReference type="NCBIfam" id="TIGR01245">
    <property type="entry name" value="trpD"/>
    <property type="match status" value="1"/>
</dbReference>
<dbReference type="PANTHER" id="PTHR43285">
    <property type="entry name" value="ANTHRANILATE PHOSPHORIBOSYLTRANSFERASE"/>
    <property type="match status" value="1"/>
</dbReference>
<dbReference type="PANTHER" id="PTHR43285:SF2">
    <property type="entry name" value="ANTHRANILATE PHOSPHORIBOSYLTRANSFERASE"/>
    <property type="match status" value="1"/>
</dbReference>
<dbReference type="Pfam" id="PF02885">
    <property type="entry name" value="Glycos_trans_3N"/>
    <property type="match status" value="1"/>
</dbReference>
<dbReference type="Pfam" id="PF00591">
    <property type="entry name" value="Glycos_transf_3"/>
    <property type="match status" value="1"/>
</dbReference>
<dbReference type="SUPFAM" id="SSF52418">
    <property type="entry name" value="Nucleoside phosphorylase/phosphoribosyltransferase catalytic domain"/>
    <property type="match status" value="1"/>
</dbReference>
<dbReference type="SUPFAM" id="SSF47648">
    <property type="entry name" value="Nucleoside phosphorylase/phosphoribosyltransferase N-terminal domain"/>
    <property type="match status" value="1"/>
</dbReference>
<comment type="function">
    <text evidence="1">Catalyzes the transfer of the phosphoribosyl group of 5-phosphorylribose-1-pyrophosphate (PRPP) to anthranilate to yield N-(5'-phosphoribosyl)-anthranilate (PRA).</text>
</comment>
<comment type="catalytic activity">
    <reaction evidence="1">
        <text>N-(5-phospho-beta-D-ribosyl)anthranilate + diphosphate = 5-phospho-alpha-D-ribose 1-diphosphate + anthranilate</text>
        <dbReference type="Rhea" id="RHEA:11768"/>
        <dbReference type="ChEBI" id="CHEBI:16567"/>
        <dbReference type="ChEBI" id="CHEBI:18277"/>
        <dbReference type="ChEBI" id="CHEBI:33019"/>
        <dbReference type="ChEBI" id="CHEBI:58017"/>
        <dbReference type="EC" id="2.4.2.18"/>
    </reaction>
</comment>
<comment type="cofactor">
    <cofactor evidence="1">
        <name>Mg(2+)</name>
        <dbReference type="ChEBI" id="CHEBI:18420"/>
    </cofactor>
    <text evidence="1">Binds 2 magnesium ions per monomer.</text>
</comment>
<comment type="pathway">
    <text evidence="1">Amino-acid biosynthesis; L-tryptophan biosynthesis; L-tryptophan from chorismate: step 2/5.</text>
</comment>
<comment type="subunit">
    <text evidence="1">Homodimer.</text>
</comment>
<comment type="similarity">
    <text evidence="1">Belongs to the anthranilate phosphoribosyltransferase family.</text>
</comment>
<sequence>MNIQQALNHITKNIHLTQAQMEDVMRSIMQGEATEAQIGALMMGLRMKGESIDEITAAARVMRELAIKIDVSDIQYLVDIVGTGGDGQNLFNVSTASSFVIAAAGATIAKHGNRGVSSKSGSSDLLEQAGINLDLDMQQTERCIREMGVGFLFAPNHHKAMKYAVGPRRELGIRSIFNLLGPLTNPAGVKRFVIGVFSDELCRPIAEVMKQLGAEHVMVVHSKDGLDEISLASQTYIAELKNGEVTEWVLNPEDVNIPSQTLSGLIVEDSNASLKLIKDALGRKKSDIGEKAANMIALNAGAGIYVSGLATSYKQGVALAHDIIYGGQALEKMSILSEFTKALKEYANN</sequence>
<proteinExistence type="evidence at protein level"/>
<name>TRPD_ACIAD</name>
<reference key="1">
    <citation type="journal article" date="1984" name="Mol. Biol. Evol.">
        <title>Nucleotide sequence of the Acinetobacter calcoaceticus trpGDC gene cluster.</title>
        <authorList>
            <person name="Kaplan J.B."/>
            <person name="Goncharoff P."/>
            <person name="Seibold A.M."/>
            <person name="Nichols B.P."/>
        </authorList>
    </citation>
    <scope>NUCLEOTIDE SEQUENCE [GENOMIC DNA]</scope>
</reference>
<reference key="2">
    <citation type="journal article" date="2004" name="Nucleic Acids Res.">
        <title>Unique features revealed by the genome sequence of Acinetobacter sp. ADP1, a versatile and naturally transformation competent bacterium.</title>
        <authorList>
            <person name="Barbe V."/>
            <person name="Vallenet D."/>
            <person name="Fonknechten N."/>
            <person name="Kreimeyer A."/>
            <person name="Oztas S."/>
            <person name="Labarre L."/>
            <person name="Cruveiller S."/>
            <person name="Robert C."/>
            <person name="Duprat S."/>
            <person name="Wincker P."/>
            <person name="Ornston L.N."/>
            <person name="Weissenbach J."/>
            <person name="Marliere P."/>
            <person name="Cohen G.N."/>
            <person name="Medigue C."/>
        </authorList>
    </citation>
    <scope>NUCLEOTIDE SEQUENCE [LARGE SCALE GENOMIC DNA]</scope>
    <source>
        <strain>ATCC 33305 / BD413 / ADP1</strain>
    </source>
</reference>
<reference key="3">
    <citation type="submission" date="2012-08" db="PDB data bank">
        <title>Structure of anthranilate phosphoribosyl transferase from Acinetobacter baylyi.</title>
        <authorList>
            <person name="Ponniah K."/>
            <person name="Nigon L.V."/>
            <person name="Anderson B.F."/>
            <person name="Norris G.E."/>
            <person name="Patrick W.M."/>
        </authorList>
    </citation>
    <scope>X-RAY CRYSTALLOGRAPHY (2.03 ANGSTROMS)</scope>
</reference>
<feature type="chain" id="PRO_0000154417" description="Anthranilate phosphoribosyltransferase">
    <location>
        <begin position="1"/>
        <end position="349"/>
    </location>
</feature>
<feature type="binding site" evidence="1">
    <location>
        <position position="82"/>
    </location>
    <ligand>
        <name>5-phospho-alpha-D-ribose 1-diphosphate</name>
        <dbReference type="ChEBI" id="CHEBI:58017"/>
    </ligand>
</feature>
<feature type="binding site" evidence="1">
    <location>
        <position position="82"/>
    </location>
    <ligand>
        <name>anthranilate</name>
        <dbReference type="ChEBI" id="CHEBI:16567"/>
        <label>1</label>
    </ligand>
</feature>
<feature type="binding site" evidence="1">
    <location>
        <begin position="85"/>
        <end position="86"/>
    </location>
    <ligand>
        <name>5-phospho-alpha-D-ribose 1-diphosphate</name>
        <dbReference type="ChEBI" id="CHEBI:58017"/>
    </ligand>
</feature>
<feature type="binding site" evidence="1">
    <location>
        <begin position="92"/>
        <end position="95"/>
    </location>
    <ligand>
        <name>5-phospho-alpha-D-ribose 1-diphosphate</name>
        <dbReference type="ChEBI" id="CHEBI:58017"/>
    </ligand>
</feature>
<feature type="binding site" evidence="1">
    <location>
        <position position="94"/>
    </location>
    <ligand>
        <name>Mg(2+)</name>
        <dbReference type="ChEBI" id="CHEBI:18420"/>
        <label>1</label>
    </ligand>
</feature>
<feature type="binding site" evidence="1">
    <location>
        <begin position="110"/>
        <end position="118"/>
    </location>
    <ligand>
        <name>5-phospho-alpha-D-ribose 1-diphosphate</name>
        <dbReference type="ChEBI" id="CHEBI:58017"/>
    </ligand>
</feature>
<feature type="binding site" evidence="1">
    <location>
        <position position="113"/>
    </location>
    <ligand>
        <name>anthranilate</name>
        <dbReference type="ChEBI" id="CHEBI:16567"/>
        <label>1</label>
    </ligand>
</feature>
<feature type="binding site" evidence="1">
    <location>
        <position position="122"/>
    </location>
    <ligand>
        <name>5-phospho-alpha-D-ribose 1-diphosphate</name>
        <dbReference type="ChEBI" id="CHEBI:58017"/>
    </ligand>
</feature>
<feature type="binding site" evidence="1">
    <location>
        <position position="168"/>
    </location>
    <ligand>
        <name>anthranilate</name>
        <dbReference type="ChEBI" id="CHEBI:16567"/>
        <label>2</label>
    </ligand>
</feature>
<feature type="binding site" evidence="1">
    <location>
        <position position="227"/>
    </location>
    <ligand>
        <name>Mg(2+)</name>
        <dbReference type="ChEBI" id="CHEBI:18420"/>
        <label>2</label>
    </ligand>
</feature>
<feature type="binding site" evidence="1">
    <location>
        <position position="228"/>
    </location>
    <ligand>
        <name>Mg(2+)</name>
        <dbReference type="ChEBI" id="CHEBI:18420"/>
        <label>1</label>
    </ligand>
</feature>
<feature type="binding site" evidence="1">
    <location>
        <position position="228"/>
    </location>
    <ligand>
        <name>Mg(2+)</name>
        <dbReference type="ChEBI" id="CHEBI:18420"/>
        <label>2</label>
    </ligand>
</feature>
<feature type="helix" evidence="2">
    <location>
        <begin position="2"/>
        <end position="11"/>
    </location>
</feature>
<feature type="helix" evidence="2">
    <location>
        <begin position="18"/>
        <end position="29"/>
    </location>
</feature>
<feature type="helix" evidence="2">
    <location>
        <begin position="35"/>
        <end position="48"/>
    </location>
</feature>
<feature type="helix" evidence="2">
    <location>
        <begin position="52"/>
        <end position="64"/>
    </location>
</feature>
<feature type="strand" evidence="2">
    <location>
        <begin position="77"/>
        <end position="82"/>
    </location>
</feature>
<feature type="helix" evidence="2">
    <location>
        <begin position="93"/>
        <end position="103"/>
    </location>
</feature>
<feature type="strand" evidence="2">
    <location>
        <begin position="107"/>
        <end position="111"/>
    </location>
</feature>
<feature type="helix" evidence="2">
    <location>
        <begin position="123"/>
        <end position="128"/>
    </location>
</feature>
<feature type="helix" evidence="2">
    <location>
        <begin position="137"/>
        <end position="147"/>
    </location>
</feature>
<feature type="strand" evidence="2">
    <location>
        <begin position="148"/>
        <end position="152"/>
    </location>
</feature>
<feature type="turn" evidence="2">
    <location>
        <begin position="162"/>
        <end position="164"/>
    </location>
</feature>
<feature type="helix" evidence="2">
    <location>
        <begin position="165"/>
        <end position="171"/>
    </location>
</feature>
<feature type="helix" evidence="2">
    <location>
        <begin position="176"/>
        <end position="180"/>
    </location>
</feature>
<feature type="helix" evidence="2">
    <location>
        <begin position="182"/>
        <end position="184"/>
    </location>
</feature>
<feature type="strand" evidence="2">
    <location>
        <begin position="191"/>
        <end position="195"/>
    </location>
</feature>
<feature type="helix" evidence="2">
    <location>
        <begin position="199"/>
        <end position="201"/>
    </location>
</feature>
<feature type="helix" evidence="2">
    <location>
        <begin position="202"/>
        <end position="211"/>
    </location>
</feature>
<feature type="strand" evidence="2">
    <location>
        <begin position="215"/>
        <end position="222"/>
    </location>
</feature>
<feature type="strand" evidence="2">
    <location>
        <begin position="231"/>
        <end position="233"/>
    </location>
</feature>
<feature type="strand" evidence="2">
    <location>
        <begin position="235"/>
        <end position="241"/>
    </location>
</feature>
<feature type="strand" evidence="2">
    <location>
        <begin position="244"/>
        <end position="250"/>
    </location>
</feature>
<feature type="helix" evidence="2">
    <location>
        <begin position="252"/>
        <end position="255"/>
    </location>
</feature>
<feature type="turn" evidence="2">
    <location>
        <begin position="263"/>
        <end position="265"/>
    </location>
</feature>
<feature type="helix" evidence="2">
    <location>
        <begin position="270"/>
        <end position="281"/>
    </location>
</feature>
<feature type="strand" evidence="2">
    <location>
        <begin position="282"/>
        <end position="284"/>
    </location>
</feature>
<feature type="helix" evidence="2">
    <location>
        <begin position="287"/>
        <end position="306"/>
    </location>
</feature>
<feature type="strand" evidence="2">
    <location>
        <begin position="309"/>
        <end position="312"/>
    </location>
</feature>
<feature type="helix" evidence="2">
    <location>
        <begin position="313"/>
        <end position="326"/>
    </location>
</feature>
<feature type="helix" evidence="2">
    <location>
        <begin position="328"/>
        <end position="343"/>
    </location>
</feature>
<organism>
    <name type="scientific">Acinetobacter baylyi (strain ATCC 33305 / BD413 / ADP1)</name>
    <dbReference type="NCBI Taxonomy" id="62977"/>
    <lineage>
        <taxon>Bacteria</taxon>
        <taxon>Pseudomonadati</taxon>
        <taxon>Pseudomonadota</taxon>
        <taxon>Gammaproteobacteria</taxon>
        <taxon>Moraxellales</taxon>
        <taxon>Moraxellaceae</taxon>
        <taxon>Acinetobacter</taxon>
    </lineage>
</organism>
<accession>P00500</accession>
<accession>Q6F9N2</accession>
<protein>
    <recommendedName>
        <fullName evidence="1">Anthranilate phosphoribosyltransferase</fullName>
        <ecNumber evidence="1">2.4.2.18</ecNumber>
    </recommendedName>
</protein>
<keyword id="KW-0002">3D-structure</keyword>
<keyword id="KW-0028">Amino-acid biosynthesis</keyword>
<keyword id="KW-0057">Aromatic amino acid biosynthesis</keyword>
<keyword id="KW-0328">Glycosyltransferase</keyword>
<keyword id="KW-0460">Magnesium</keyword>
<keyword id="KW-0479">Metal-binding</keyword>
<keyword id="KW-0808">Transferase</keyword>
<keyword id="KW-0822">Tryptophan biosynthesis</keyword>
<gene>
    <name evidence="1" type="primary">trpD</name>
    <name type="ordered locus">ACIAD2462</name>
</gene>
<evidence type="ECO:0000255" key="1">
    <source>
        <dbReference type="HAMAP-Rule" id="MF_00211"/>
    </source>
</evidence>
<evidence type="ECO:0007829" key="2">
    <source>
        <dbReference type="PDB" id="4YI7"/>
    </source>
</evidence>